<organism>
    <name type="scientific">Methanocaldococcus jannaschii (strain ATCC 43067 / DSM 2661 / JAL-1 / JCM 10045 / NBRC 100440)</name>
    <name type="common">Methanococcus jannaschii</name>
    <dbReference type="NCBI Taxonomy" id="243232"/>
    <lineage>
        <taxon>Archaea</taxon>
        <taxon>Methanobacteriati</taxon>
        <taxon>Methanobacteriota</taxon>
        <taxon>Methanomada group</taxon>
        <taxon>Methanococci</taxon>
        <taxon>Methanococcales</taxon>
        <taxon>Methanocaldococcaceae</taxon>
        <taxon>Methanocaldococcus</taxon>
    </lineage>
</organism>
<gene>
    <name evidence="1" type="primary">psmA</name>
    <name type="ordered locus">MJ0591</name>
</gene>
<keyword id="KW-0002">3D-structure</keyword>
<keyword id="KW-0963">Cytoplasm</keyword>
<keyword id="KW-0647">Proteasome</keyword>
<keyword id="KW-1185">Reference proteome</keyword>
<evidence type="ECO:0000255" key="1">
    <source>
        <dbReference type="HAMAP-Rule" id="MF_00289"/>
    </source>
</evidence>
<evidence type="ECO:0000256" key="2">
    <source>
        <dbReference type="SAM" id="MobiDB-lite"/>
    </source>
</evidence>
<evidence type="ECO:0000269" key="3">
    <source>
    </source>
</evidence>
<evidence type="ECO:0000269" key="4">
    <source>
    </source>
</evidence>
<protein>
    <recommendedName>
        <fullName evidence="1">Proteasome subunit alpha</fullName>
    </recommendedName>
    <alternativeName>
        <fullName evidence="1">20S proteasome alpha subunit</fullName>
    </alternativeName>
    <alternativeName>
        <fullName evidence="1">Proteasome core protein PsmA</fullName>
    </alternativeName>
</protein>
<accession>Q60177</accession>
<name>PSA_METJA</name>
<sequence>MQMVPPSAYDRAITVFSPEGRLYQVEYAREAVRRGTTAIGIACKDGVVLAVDRRITSKLVKIRSIEKIFQIDDHVAAATSGLVADARVLIDRARLEAQIYRLTYGEEISIEMLAKKICDIKQAYTQHGGVRPFGVSLLIAGIDKNEARLFETDPSGALIEYKATAIGSGRPVVMELLEKEYRDDITLDEGLELAITALTKANEDIKPENVDVCIITVKDAQFKKIPVEEIKKLIEKVKKKLNEENKKEEENREETKEKQEE</sequence>
<comment type="function">
    <text evidence="1 3">Component of the proteasome core, a large protease complex with broad specificity involved in protein degradation. The M.jannaschii proteasome is able to cleave oligopeptides after Glu, Asp, Tyr, Phe, Trp, slightly after Arg, but not after Ala. Thus, displays caspase-like and chymotrypsin-like activities and low level of trypsin-like activity.</text>
</comment>
<comment type="activity regulation">
    <text evidence="1">The formation of the proteasomal ATPase PAN-20S proteasome complex, via the docking of the C-termini of PAN into the intersubunit pockets in the alpha-rings, triggers opening of the gate for substrate entry. Interconversion between the open-gate and close-gate conformations leads to a dynamic regulation of the 20S proteasome proteolysis activity.</text>
</comment>
<comment type="subunit">
    <text evidence="1 3 4">The 20S proteasome core is composed of 14 alpha and 14 beta subunits that assemble into four stacked heptameric rings, resulting in a barrel-shaped structure. The two inner rings, each composed of seven catalytic beta subunits, are sandwiched by two outer rings, each composed of seven alpha subunits. The catalytic chamber with the active sites is on the inside of the barrel. Has a gated structure, the ends of the cylinder being occluded by the N-termini of the alpha-subunits. Is capped at one or both ends by the proteasome regulatory ATPase, PAN.</text>
</comment>
<comment type="subcellular location">
    <subcellularLocation>
        <location evidence="1">Cytoplasm</location>
    </subcellularLocation>
</comment>
<comment type="similarity">
    <text evidence="1">Belongs to the peptidase T1A family.</text>
</comment>
<feature type="chain" id="PRO_0000124174" description="Proteasome subunit alpha">
    <location>
        <begin position="1"/>
        <end position="261"/>
    </location>
</feature>
<feature type="region of interest" description="Disordered" evidence="2">
    <location>
        <begin position="242"/>
        <end position="261"/>
    </location>
</feature>
<proteinExistence type="evidence at protein level"/>
<dbReference type="EMBL" id="L77117">
    <property type="protein sequence ID" value="AAB98581.1"/>
    <property type="molecule type" value="Genomic_DNA"/>
</dbReference>
<dbReference type="PIR" id="G64373">
    <property type="entry name" value="G64373"/>
</dbReference>
<dbReference type="RefSeq" id="WP_010870095.1">
    <property type="nucleotide sequence ID" value="NC_000909.1"/>
</dbReference>
<dbReference type="PDB" id="3H4P">
    <property type="method" value="X-ray"/>
    <property type="resolution" value="4.10 A"/>
    <property type="chains" value="A/B/C/D/E/F/G/H/I/J/K/L/M/N=1-261"/>
</dbReference>
<dbReference type="PDBsum" id="3H4P"/>
<dbReference type="SMR" id="Q60177"/>
<dbReference type="FunCoup" id="Q60177">
    <property type="interactions" value="127"/>
</dbReference>
<dbReference type="STRING" id="243232.MJ_0591"/>
<dbReference type="PaxDb" id="243232-MJ_0591"/>
<dbReference type="EnsemblBacteria" id="AAB98581">
    <property type="protein sequence ID" value="AAB98581"/>
    <property type="gene ID" value="MJ_0591"/>
</dbReference>
<dbReference type="GeneID" id="1451456"/>
<dbReference type="KEGG" id="mja:MJ_0591"/>
<dbReference type="eggNOG" id="arCOG00971">
    <property type="taxonomic scope" value="Archaea"/>
</dbReference>
<dbReference type="HOGENOM" id="CLU_035750_4_1_2"/>
<dbReference type="InParanoid" id="Q60177"/>
<dbReference type="OrthoDB" id="9421at2157"/>
<dbReference type="PhylomeDB" id="Q60177"/>
<dbReference type="Proteomes" id="UP000000805">
    <property type="component" value="Chromosome"/>
</dbReference>
<dbReference type="GO" id="GO:0005737">
    <property type="term" value="C:cytoplasm"/>
    <property type="evidence" value="ECO:0007669"/>
    <property type="project" value="UniProtKB-SubCell"/>
</dbReference>
<dbReference type="GO" id="GO:0019773">
    <property type="term" value="C:proteasome core complex, alpha-subunit complex"/>
    <property type="evidence" value="ECO:0000314"/>
    <property type="project" value="UniProtKB"/>
</dbReference>
<dbReference type="GO" id="GO:0004175">
    <property type="term" value="F:endopeptidase activity"/>
    <property type="evidence" value="ECO:0000314"/>
    <property type="project" value="UniProtKB"/>
</dbReference>
<dbReference type="GO" id="GO:0004298">
    <property type="term" value="F:threonine-type endopeptidase activity"/>
    <property type="evidence" value="ECO:0007669"/>
    <property type="project" value="InterPro"/>
</dbReference>
<dbReference type="GO" id="GO:0010498">
    <property type="term" value="P:proteasomal protein catabolic process"/>
    <property type="evidence" value="ECO:0000314"/>
    <property type="project" value="UniProtKB"/>
</dbReference>
<dbReference type="GO" id="GO:0043161">
    <property type="term" value="P:proteasome-mediated ubiquitin-dependent protein catabolic process"/>
    <property type="evidence" value="ECO:0000318"/>
    <property type="project" value="GO_Central"/>
</dbReference>
<dbReference type="CDD" id="cd03756">
    <property type="entry name" value="proteasome_alpha_archeal"/>
    <property type="match status" value="1"/>
</dbReference>
<dbReference type="FunFam" id="3.60.20.10:FF:000004">
    <property type="entry name" value="Proteasome subunit alpha type-4"/>
    <property type="match status" value="1"/>
</dbReference>
<dbReference type="Gene3D" id="3.60.20.10">
    <property type="entry name" value="Glutamine Phosphoribosylpyrophosphate, subunit 1, domain 1"/>
    <property type="match status" value="1"/>
</dbReference>
<dbReference type="HAMAP" id="MF_00289_A">
    <property type="entry name" value="Proteasome_A_A"/>
    <property type="match status" value="1"/>
</dbReference>
<dbReference type="InterPro" id="IPR029055">
    <property type="entry name" value="Ntn_hydrolases_N"/>
</dbReference>
<dbReference type="InterPro" id="IPR050115">
    <property type="entry name" value="Proteasome_alpha"/>
</dbReference>
<dbReference type="InterPro" id="IPR023332">
    <property type="entry name" value="Proteasome_alpha-type"/>
</dbReference>
<dbReference type="InterPro" id="IPR019982">
    <property type="entry name" value="Proteasome_asu_arc"/>
</dbReference>
<dbReference type="InterPro" id="IPR000426">
    <property type="entry name" value="Proteasome_asu_N"/>
</dbReference>
<dbReference type="InterPro" id="IPR001353">
    <property type="entry name" value="Proteasome_sua/b"/>
</dbReference>
<dbReference type="NCBIfam" id="TIGR03633">
    <property type="entry name" value="arc_protsome_A"/>
    <property type="match status" value="1"/>
</dbReference>
<dbReference type="NCBIfam" id="NF003075">
    <property type="entry name" value="PRK03996.1"/>
    <property type="match status" value="1"/>
</dbReference>
<dbReference type="PANTHER" id="PTHR11599">
    <property type="entry name" value="PROTEASOME SUBUNIT ALPHA/BETA"/>
    <property type="match status" value="1"/>
</dbReference>
<dbReference type="Pfam" id="PF00227">
    <property type="entry name" value="Proteasome"/>
    <property type="match status" value="1"/>
</dbReference>
<dbReference type="Pfam" id="PF10584">
    <property type="entry name" value="Proteasome_A_N"/>
    <property type="match status" value="1"/>
</dbReference>
<dbReference type="SMART" id="SM00948">
    <property type="entry name" value="Proteasome_A_N"/>
    <property type="match status" value="1"/>
</dbReference>
<dbReference type="SUPFAM" id="SSF56235">
    <property type="entry name" value="N-terminal nucleophile aminohydrolases (Ntn hydrolases)"/>
    <property type="match status" value="1"/>
</dbReference>
<dbReference type="PROSITE" id="PS00388">
    <property type="entry name" value="PROTEASOME_ALPHA_1"/>
    <property type="match status" value="1"/>
</dbReference>
<dbReference type="PROSITE" id="PS51475">
    <property type="entry name" value="PROTEASOME_ALPHA_2"/>
    <property type="match status" value="1"/>
</dbReference>
<reference key="1">
    <citation type="journal article" date="1996" name="Science">
        <title>Complete genome sequence of the methanogenic archaeon, Methanococcus jannaschii.</title>
        <authorList>
            <person name="Bult C.J."/>
            <person name="White O."/>
            <person name="Olsen G.J."/>
            <person name="Zhou L."/>
            <person name="Fleischmann R.D."/>
            <person name="Sutton G.G."/>
            <person name="Blake J.A."/>
            <person name="FitzGerald L.M."/>
            <person name="Clayton R.A."/>
            <person name="Gocayne J.D."/>
            <person name="Kerlavage A.R."/>
            <person name="Dougherty B.A."/>
            <person name="Tomb J.-F."/>
            <person name="Adams M.D."/>
            <person name="Reich C.I."/>
            <person name="Overbeek R."/>
            <person name="Kirkness E.F."/>
            <person name="Weinstock K.G."/>
            <person name="Merrick J.M."/>
            <person name="Glodek A."/>
            <person name="Scott J.L."/>
            <person name="Geoghagen N.S.M."/>
            <person name="Weidman J.F."/>
            <person name="Fuhrmann J.L."/>
            <person name="Nguyen D."/>
            <person name="Utterback T.R."/>
            <person name="Kelley J.M."/>
            <person name="Peterson J.D."/>
            <person name="Sadow P.W."/>
            <person name="Hanna M.C."/>
            <person name="Cotton M.D."/>
            <person name="Roberts K.M."/>
            <person name="Hurst M.A."/>
            <person name="Kaine B.P."/>
            <person name="Borodovsky M."/>
            <person name="Klenk H.-P."/>
            <person name="Fraser C.M."/>
            <person name="Smith H.O."/>
            <person name="Woese C.R."/>
            <person name="Venter J.C."/>
        </authorList>
    </citation>
    <scope>NUCLEOTIDE SEQUENCE [LARGE SCALE GENOMIC DNA]</scope>
    <source>
        <strain>ATCC 43067 / DSM 2661 / JAL-1 / JCM 10045 / NBRC 100440</strain>
    </source>
</reference>
<reference key="2">
    <citation type="journal article" date="2000" name="J. Bacteriol.">
        <title>Biochemical and physical properties of the Methanococcus jannaschii 20S proteasome and PAN, a homolog of the ATPase (Rpt) subunits of the eucaryal 26S proteasome.</title>
        <authorList>
            <person name="Wilson H.L."/>
            <person name="Ou M.S."/>
            <person name="Aldrich H.C."/>
            <person name="Maupin-Furlow J."/>
        </authorList>
    </citation>
    <scope>FUNCTION</scope>
    <scope>CATALYTIC ACTIVITY</scope>
    <scope>SUBUNIT</scope>
    <scope>INTERACTION WITH PAN</scope>
</reference>
<reference key="3">
    <citation type="journal article" date="2009" name="Mol. Cell">
        <title>Structural insights into the regulatory particle of the proteasome from Methanocaldococcus jannaschii.</title>
        <authorList>
            <person name="Zhang F."/>
            <person name="Hu M."/>
            <person name="Tian G."/>
            <person name="Zhang P."/>
            <person name="Finley D."/>
            <person name="Jeffrey P.D."/>
            <person name="Shi Y."/>
        </authorList>
    </citation>
    <scope>X-RAY CRYSTALLOGRAPHY (4.1 ANGSTROMS) IN COMPLEX WITH BETA SUBUNIT</scope>
    <scope>GATED STRUCTURE</scope>
    <scope>SUBUNIT</scope>
</reference>